<evidence type="ECO:0000250" key="1">
    <source>
        <dbReference type="UniProtKB" id="A0A218N034"/>
    </source>
</evidence>
<evidence type="ECO:0000255" key="2"/>
<evidence type="ECO:0000256" key="3">
    <source>
        <dbReference type="SAM" id="MobiDB-lite"/>
    </source>
</evidence>
<evidence type="ECO:0000269" key="4">
    <source>
    </source>
</evidence>
<evidence type="ECO:0000303" key="5">
    <source>
    </source>
</evidence>
<evidence type="ECO:0000305" key="6"/>
<evidence type="ECO:0000312" key="7">
    <source>
        <dbReference type="EMBL" id="QBL54504.1"/>
    </source>
</evidence>
<comment type="function">
    <text evidence="1">May act in meiotic drive.</text>
</comment>
<comment type="subcellular location">
    <subcellularLocation>
        <location evidence="2 4">Endoplasmic reticulum membrane</location>
        <topology evidence="2">Multi-pass membrane protein</topology>
    </subcellularLocation>
    <text evidence="4">Localizes to the endoplasmic reticulum in both vegetative cells and in spores.</text>
</comment>
<comment type="similarity">
    <text evidence="6">Belongs to the WTF family.</text>
</comment>
<name>WTF14_SCHKA</name>
<gene>
    <name evidence="7" type="primary">wtf14</name>
</gene>
<reference evidence="7" key="1">
    <citation type="journal article" date="2020" name="PLoS Genet.">
        <title>Dramatically diverse Schizosaccharomyces pombe wtf meiotic drivers all display high gamete-killing efficiency.</title>
        <authorList>
            <person name="Bravo Nunez M.A."/>
            <person name="Sabbarini I.M."/>
            <person name="Eickbush M.T."/>
            <person name="Liang Y."/>
            <person name="Lange J.J."/>
            <person name="Kent A.M."/>
            <person name="Zanders S.E."/>
        </authorList>
    </citation>
    <scope>NUCLEOTIDE SEQUENCE [GENOMIC DNA]</scope>
    <scope>SUBCELLULAR LOCATION</scope>
</reference>
<feature type="chain" id="PRO_0000452261" description="Wtf element wtf14">
    <location>
        <begin position="1"/>
        <end position="229"/>
    </location>
</feature>
<feature type="transmembrane region" description="Helical" evidence="2">
    <location>
        <begin position="71"/>
        <end position="91"/>
    </location>
</feature>
<feature type="transmembrane region" description="Helical" evidence="2">
    <location>
        <begin position="100"/>
        <end position="120"/>
    </location>
</feature>
<feature type="transmembrane region" description="Helical" evidence="2">
    <location>
        <begin position="151"/>
        <end position="171"/>
    </location>
</feature>
<feature type="transmembrane region" description="Helical" evidence="2">
    <location>
        <begin position="188"/>
        <end position="208"/>
    </location>
</feature>
<feature type="region of interest" description="Disordered" evidence="3">
    <location>
        <begin position="1"/>
        <end position="27"/>
    </location>
</feature>
<feature type="compositionally biased region" description="Basic and acidic residues" evidence="3">
    <location>
        <begin position="1"/>
        <end position="26"/>
    </location>
</feature>
<protein>
    <recommendedName>
        <fullName evidence="5">Wtf element wtf14</fullName>
    </recommendedName>
</protein>
<proteinExistence type="inferred from homology"/>
<sequence>MENNHHLAKDSLDELNPKRGKGEHETQVSQYTVVEEATIPQSLVKTSRSADHKVMEASKVADTRTAWSTKIPAVLLPVFVINIALFKYLVFANFSTKDRVLFGLGNGGINIFSMWLLLATYETWFRSIKEVIVACGAGIRSFPQKRGVNMLYAILKLTFVNAFAIPLLMFFRSHFEQWRLGCPLVERVIGVMLNVAYFIIEIENPGLFTRVFNKYCDCLFAIRDILNRN</sequence>
<keyword id="KW-0256">Endoplasmic reticulum</keyword>
<keyword id="KW-0472">Membrane</keyword>
<keyword id="KW-0812">Transmembrane</keyword>
<keyword id="KW-1133">Transmembrane helix</keyword>
<accession>A0A482ASA5</accession>
<organism evidence="7">
    <name type="scientific">Schizosaccharomyces kambucha</name>
    <name type="common">Fission yeast</name>
    <dbReference type="NCBI Taxonomy" id="204045"/>
    <lineage>
        <taxon>Eukaryota</taxon>
        <taxon>Fungi</taxon>
        <taxon>Dikarya</taxon>
        <taxon>Ascomycota</taxon>
        <taxon>Taphrinomycotina</taxon>
        <taxon>Schizosaccharomycetes</taxon>
        <taxon>Schizosaccharomycetales</taxon>
        <taxon>Schizosaccharomycetaceae</taxon>
        <taxon>Schizosaccharomyces</taxon>
    </lineage>
</organism>
<dbReference type="EMBL" id="MH837440">
    <property type="protein sequence ID" value="QBL54504.1"/>
    <property type="molecule type" value="Genomic_DNA"/>
</dbReference>
<dbReference type="GO" id="GO:1990578">
    <property type="term" value="C:perinuclear endoplasmic reticulum membrane"/>
    <property type="evidence" value="ECO:0000314"/>
    <property type="project" value="UniProtKB"/>
</dbReference>